<accession>Q7W9J5</accession>
<evidence type="ECO:0000255" key="1">
    <source>
        <dbReference type="HAMAP-Rule" id="MF_00364"/>
    </source>
</evidence>
<evidence type="ECO:0000305" key="2"/>
<comment type="function">
    <text evidence="1">Plays a role in peptidoglycan recycling by cleaving the terminal beta-1,4-linked N-acetylglucosamine (GlcNAc) from peptide-linked peptidoglycan fragments, giving rise to free GlcNAc, anhydro-N-acetylmuramic acid and anhydro-N-acetylmuramic acid-linked peptides.</text>
</comment>
<comment type="catalytic activity">
    <reaction evidence="1">
        <text>Hydrolysis of terminal non-reducing N-acetyl-D-hexosamine residues in N-acetyl-beta-D-hexosaminides.</text>
        <dbReference type="EC" id="3.2.1.52"/>
    </reaction>
</comment>
<comment type="pathway">
    <text evidence="1">Cell wall biogenesis; peptidoglycan recycling.</text>
</comment>
<comment type="subcellular location">
    <subcellularLocation>
        <location evidence="1">Cytoplasm</location>
    </subcellularLocation>
</comment>
<comment type="similarity">
    <text evidence="1">Belongs to the glycosyl hydrolase 3 family. NagZ subfamily.</text>
</comment>
<comment type="sequence caution" evidence="2">
    <conflict type="erroneous initiation">
        <sequence resource="EMBL-CDS" id="CAE37065"/>
    </conflict>
</comment>
<keyword id="KW-0131">Cell cycle</keyword>
<keyword id="KW-0132">Cell division</keyword>
<keyword id="KW-0133">Cell shape</keyword>
<keyword id="KW-0961">Cell wall biogenesis/degradation</keyword>
<keyword id="KW-0963">Cytoplasm</keyword>
<keyword id="KW-0326">Glycosidase</keyword>
<keyword id="KW-0378">Hydrolase</keyword>
<keyword id="KW-0573">Peptidoglycan synthesis</keyword>
<proteinExistence type="inferred from homology"/>
<dbReference type="EC" id="3.2.1.52" evidence="1"/>
<dbReference type="EMBL" id="BX640428">
    <property type="protein sequence ID" value="CAE37065.1"/>
    <property type="status" value="ALT_INIT"/>
    <property type="molecule type" value="Genomic_DNA"/>
</dbReference>
<dbReference type="RefSeq" id="WP_003810348.1">
    <property type="nucleotide sequence ID" value="NC_002928.3"/>
</dbReference>
<dbReference type="SMR" id="Q7W9J5"/>
<dbReference type="CAZy" id="GH3">
    <property type="family name" value="Glycoside Hydrolase Family 3"/>
</dbReference>
<dbReference type="GeneID" id="93203528"/>
<dbReference type="KEGG" id="bpa:BPP1764"/>
<dbReference type="HOGENOM" id="CLU_008392_0_0_4"/>
<dbReference type="UniPathway" id="UPA00544"/>
<dbReference type="Proteomes" id="UP000001421">
    <property type="component" value="Chromosome"/>
</dbReference>
<dbReference type="GO" id="GO:0005737">
    <property type="term" value="C:cytoplasm"/>
    <property type="evidence" value="ECO:0007669"/>
    <property type="project" value="UniProtKB-SubCell"/>
</dbReference>
<dbReference type="GO" id="GO:0004563">
    <property type="term" value="F:beta-N-acetylhexosaminidase activity"/>
    <property type="evidence" value="ECO:0007669"/>
    <property type="project" value="UniProtKB-UniRule"/>
</dbReference>
<dbReference type="GO" id="GO:0005975">
    <property type="term" value="P:carbohydrate metabolic process"/>
    <property type="evidence" value="ECO:0007669"/>
    <property type="project" value="InterPro"/>
</dbReference>
<dbReference type="GO" id="GO:0051301">
    <property type="term" value="P:cell division"/>
    <property type="evidence" value="ECO:0007669"/>
    <property type="project" value="UniProtKB-KW"/>
</dbReference>
<dbReference type="GO" id="GO:0071555">
    <property type="term" value="P:cell wall organization"/>
    <property type="evidence" value="ECO:0007669"/>
    <property type="project" value="UniProtKB-KW"/>
</dbReference>
<dbReference type="GO" id="GO:0009252">
    <property type="term" value="P:peptidoglycan biosynthetic process"/>
    <property type="evidence" value="ECO:0007669"/>
    <property type="project" value="UniProtKB-KW"/>
</dbReference>
<dbReference type="GO" id="GO:0009254">
    <property type="term" value="P:peptidoglycan turnover"/>
    <property type="evidence" value="ECO:0007669"/>
    <property type="project" value="UniProtKB-UniRule"/>
</dbReference>
<dbReference type="GO" id="GO:0008360">
    <property type="term" value="P:regulation of cell shape"/>
    <property type="evidence" value="ECO:0007669"/>
    <property type="project" value="UniProtKB-KW"/>
</dbReference>
<dbReference type="Gene3D" id="3.20.20.300">
    <property type="entry name" value="Glycoside hydrolase, family 3, N-terminal domain"/>
    <property type="match status" value="1"/>
</dbReference>
<dbReference type="HAMAP" id="MF_00364">
    <property type="entry name" value="NagZ"/>
    <property type="match status" value="1"/>
</dbReference>
<dbReference type="InterPro" id="IPR022956">
    <property type="entry name" value="Beta_hexosaminidase_bac"/>
</dbReference>
<dbReference type="InterPro" id="IPR019800">
    <property type="entry name" value="Glyco_hydro_3_AS"/>
</dbReference>
<dbReference type="InterPro" id="IPR001764">
    <property type="entry name" value="Glyco_hydro_3_N"/>
</dbReference>
<dbReference type="InterPro" id="IPR036962">
    <property type="entry name" value="Glyco_hydro_3_N_sf"/>
</dbReference>
<dbReference type="InterPro" id="IPR017853">
    <property type="entry name" value="Glycoside_hydrolase_SF"/>
</dbReference>
<dbReference type="InterPro" id="IPR050226">
    <property type="entry name" value="NagZ_Beta-hexosaminidase"/>
</dbReference>
<dbReference type="NCBIfam" id="NF003740">
    <property type="entry name" value="PRK05337.1"/>
    <property type="match status" value="1"/>
</dbReference>
<dbReference type="PANTHER" id="PTHR30480:SF13">
    <property type="entry name" value="BETA-HEXOSAMINIDASE"/>
    <property type="match status" value="1"/>
</dbReference>
<dbReference type="PANTHER" id="PTHR30480">
    <property type="entry name" value="BETA-HEXOSAMINIDASE-RELATED"/>
    <property type="match status" value="1"/>
</dbReference>
<dbReference type="Pfam" id="PF00933">
    <property type="entry name" value="Glyco_hydro_3"/>
    <property type="match status" value="1"/>
</dbReference>
<dbReference type="SUPFAM" id="SSF51445">
    <property type="entry name" value="(Trans)glycosidases"/>
    <property type="match status" value="1"/>
</dbReference>
<dbReference type="PROSITE" id="PS00775">
    <property type="entry name" value="GLYCOSYL_HYDROL_F3"/>
    <property type="match status" value="1"/>
</dbReference>
<organism>
    <name type="scientific">Bordetella parapertussis (strain 12822 / ATCC BAA-587 / NCTC 13253)</name>
    <dbReference type="NCBI Taxonomy" id="257311"/>
    <lineage>
        <taxon>Bacteria</taxon>
        <taxon>Pseudomonadati</taxon>
        <taxon>Pseudomonadota</taxon>
        <taxon>Betaproteobacteria</taxon>
        <taxon>Burkholderiales</taxon>
        <taxon>Alcaligenaceae</taxon>
        <taxon>Bordetella</taxon>
    </lineage>
</organism>
<feature type="chain" id="PRO_0000210782" description="Beta-hexosaminidase">
    <location>
        <begin position="1"/>
        <end position="353"/>
    </location>
</feature>
<feature type="active site" description="Proton donor/acceptor" evidence="1">
    <location>
        <position position="192"/>
    </location>
</feature>
<feature type="active site" description="Nucleophile" evidence="1">
    <location>
        <position position="263"/>
    </location>
</feature>
<feature type="binding site" evidence="1">
    <location>
        <position position="74"/>
    </location>
    <ligand>
        <name>substrate</name>
    </ligand>
</feature>
<feature type="binding site" evidence="1">
    <location>
        <position position="82"/>
    </location>
    <ligand>
        <name>substrate</name>
    </ligand>
</feature>
<feature type="binding site" evidence="1">
    <location>
        <position position="149"/>
    </location>
    <ligand>
        <name>substrate</name>
    </ligand>
</feature>
<feature type="binding site" evidence="1">
    <location>
        <begin position="179"/>
        <end position="180"/>
    </location>
    <ligand>
        <name>substrate</name>
    </ligand>
</feature>
<feature type="site" description="Important for catalytic activity" evidence="1">
    <location>
        <position position="190"/>
    </location>
</feature>
<reference key="1">
    <citation type="journal article" date="2003" name="Nat. Genet.">
        <title>Comparative analysis of the genome sequences of Bordetella pertussis, Bordetella parapertussis and Bordetella bronchiseptica.</title>
        <authorList>
            <person name="Parkhill J."/>
            <person name="Sebaihia M."/>
            <person name="Preston A."/>
            <person name="Murphy L.D."/>
            <person name="Thomson N.R."/>
            <person name="Harris D.E."/>
            <person name="Holden M.T.G."/>
            <person name="Churcher C.M."/>
            <person name="Bentley S.D."/>
            <person name="Mungall K.L."/>
            <person name="Cerdeno-Tarraga A.-M."/>
            <person name="Temple L."/>
            <person name="James K.D."/>
            <person name="Harris B."/>
            <person name="Quail M.A."/>
            <person name="Achtman M."/>
            <person name="Atkin R."/>
            <person name="Baker S."/>
            <person name="Basham D."/>
            <person name="Bason N."/>
            <person name="Cherevach I."/>
            <person name="Chillingworth T."/>
            <person name="Collins M."/>
            <person name="Cronin A."/>
            <person name="Davis P."/>
            <person name="Doggett J."/>
            <person name="Feltwell T."/>
            <person name="Goble A."/>
            <person name="Hamlin N."/>
            <person name="Hauser H."/>
            <person name="Holroyd S."/>
            <person name="Jagels K."/>
            <person name="Leather S."/>
            <person name="Moule S."/>
            <person name="Norberczak H."/>
            <person name="O'Neil S."/>
            <person name="Ormond D."/>
            <person name="Price C."/>
            <person name="Rabbinowitsch E."/>
            <person name="Rutter S."/>
            <person name="Sanders M."/>
            <person name="Saunders D."/>
            <person name="Seeger K."/>
            <person name="Sharp S."/>
            <person name="Simmonds M."/>
            <person name="Skelton J."/>
            <person name="Squares R."/>
            <person name="Squares S."/>
            <person name="Stevens K."/>
            <person name="Unwin L."/>
            <person name="Whitehead S."/>
            <person name="Barrell B.G."/>
            <person name="Maskell D.J."/>
        </authorList>
    </citation>
    <scope>NUCLEOTIDE SEQUENCE [LARGE SCALE GENOMIC DNA]</scope>
    <source>
        <strain>12822 / ATCC BAA-587 / NCTC 13253</strain>
    </source>
</reference>
<protein>
    <recommendedName>
        <fullName evidence="1">Beta-hexosaminidase</fullName>
        <ecNumber evidence="1">3.2.1.52</ecNumber>
    </recommendedName>
    <alternativeName>
        <fullName evidence="1">Beta-N-acetylhexosaminidase</fullName>
    </alternativeName>
    <alternativeName>
        <fullName evidence="1">N-acetyl-beta-glucosaminidase</fullName>
    </alternativeName>
</protein>
<name>NAGZ_BORPA</name>
<gene>
    <name evidence="1" type="primary">nagZ</name>
    <name type="ordered locus">BPP1764</name>
</gene>
<sequence>MSSKKKTKPVLPPGPVMVDVAGTTLTKDEKRRLRNPLVGGVILFARNFTDRRQLCALTRAIHKARKEPLLIAVDHEGGRVQRFRDDGFTALPPMQELGKLWDRDPLAAMRLATEAGYVLAAELRACGVDLSFTPVLDLDYGVSKVIGNRAFHHDARVVTMLSRALAQGLALAGMAACGKHFPGHGFVGADSHHEIPVDPRPLARILKDDAAPYAWLGDLVMPAVMPAHVIYPKVDAQPAGFSRRWVSEILRERLGYDGVVFSDDLTMEGASVAGDILARAEAALGAGCDMVLVCNRPDLADELLDRLQVQHPAASVERIRRLMPRFAAPDWDTLQNDSRYQHARRLQSQIVSG</sequence>